<proteinExistence type="inferred from homology"/>
<sequence length="272" mass="28486">MPLVDPVTMSSSAIVKGAVAQSTSTTKSTPGSQATESSTTTAGSSSSLATLRPVQIKQTPAAQTVRHALPAALTALYLLRFDALVTNPVPVMLNALPVVAAFQMTYALLCLPAAGEPASKSNRKPRPGEKKKGGDIGSSTIITALLASVLTSIVTPFLYFAMVLFGAPFLTHGSHTFLCAAHLALLTLFPLFYVHGVDSAAWAAVGGFRAPLDETFGGLVGGIVGAWLGAVPIPLDWDREWQRWPVTILCGAYGGYLLGRVLGGTLFWGKKF</sequence>
<dbReference type="EMBL" id="BX294019">
    <property type="protein sequence ID" value="CAD70892.1"/>
    <property type="molecule type" value="Genomic_DNA"/>
</dbReference>
<dbReference type="EMBL" id="CM002240">
    <property type="protein sequence ID" value="EAA31674.1"/>
    <property type="molecule type" value="Genomic_DNA"/>
</dbReference>
<dbReference type="RefSeq" id="XP_960910.1">
    <property type="nucleotide sequence ID" value="XM_955817.2"/>
</dbReference>
<dbReference type="STRING" id="367110.Q871U9"/>
<dbReference type="PaxDb" id="5141-EFNCRP00000006655"/>
<dbReference type="EnsemblFungi" id="EAA31674">
    <property type="protein sequence ID" value="EAA31674"/>
    <property type="gene ID" value="NCU06663"/>
</dbReference>
<dbReference type="GeneID" id="3877066"/>
<dbReference type="KEGG" id="ncr:NCU06663"/>
<dbReference type="VEuPathDB" id="FungiDB:NCU06663"/>
<dbReference type="HOGENOM" id="CLU_069429_0_0_1"/>
<dbReference type="InParanoid" id="Q871U9"/>
<dbReference type="OMA" id="WQRWPVT"/>
<dbReference type="OrthoDB" id="17366at2759"/>
<dbReference type="UniPathway" id="UPA00196"/>
<dbReference type="Proteomes" id="UP000001805">
    <property type="component" value="Chromosome 2, Linkage Group V"/>
</dbReference>
<dbReference type="GO" id="GO:0005789">
    <property type="term" value="C:endoplasmic reticulum membrane"/>
    <property type="evidence" value="ECO:0007669"/>
    <property type="project" value="UniProtKB-SubCell"/>
</dbReference>
<dbReference type="GO" id="GO:0051377">
    <property type="term" value="F:mannose-ethanolamine phosphotransferase activity"/>
    <property type="evidence" value="ECO:0000318"/>
    <property type="project" value="GO_Central"/>
</dbReference>
<dbReference type="GO" id="GO:0006506">
    <property type="term" value="P:GPI anchor biosynthetic process"/>
    <property type="evidence" value="ECO:0000318"/>
    <property type="project" value="GO_Central"/>
</dbReference>
<dbReference type="InterPro" id="IPR009580">
    <property type="entry name" value="GPI_biosynthesis_protein_Pig-F"/>
</dbReference>
<dbReference type="Pfam" id="PF06699">
    <property type="entry name" value="PIG-F"/>
    <property type="match status" value="1"/>
</dbReference>
<keyword id="KW-0256">Endoplasmic reticulum</keyword>
<keyword id="KW-0337">GPI-anchor biosynthesis</keyword>
<keyword id="KW-0472">Membrane</keyword>
<keyword id="KW-1185">Reference proteome</keyword>
<keyword id="KW-0812">Transmembrane</keyword>
<keyword id="KW-1133">Transmembrane helix</keyword>
<comment type="function">
    <text evidence="1">Acts in the GPI biosynthetic pathway between GlcNAc-PI synthesis and GPI transfer to protein.</text>
</comment>
<comment type="pathway">
    <text>Glycolipid biosynthesis; glycosylphosphatidylinositol-anchor biosynthesis.</text>
</comment>
<comment type="subcellular location">
    <subcellularLocation>
        <location evidence="1">Endoplasmic reticulum membrane</location>
        <topology evidence="1">Multi-pass membrane protein</topology>
    </subcellularLocation>
</comment>
<comment type="similarity">
    <text evidence="4">Belongs to the PIGF family.</text>
</comment>
<evidence type="ECO:0000250" key="1"/>
<evidence type="ECO:0000255" key="2"/>
<evidence type="ECO:0000256" key="3">
    <source>
        <dbReference type="SAM" id="MobiDB-lite"/>
    </source>
</evidence>
<evidence type="ECO:0000305" key="4"/>
<reference key="1">
    <citation type="journal article" date="2003" name="Nucleic Acids Res.">
        <title>What's in the genome of a filamentous fungus? Analysis of the Neurospora genome sequence.</title>
        <authorList>
            <person name="Mannhaupt G."/>
            <person name="Montrone C."/>
            <person name="Haase D."/>
            <person name="Mewes H.-W."/>
            <person name="Aign V."/>
            <person name="Hoheisel J.D."/>
            <person name="Fartmann B."/>
            <person name="Nyakatura G."/>
            <person name="Kempken F."/>
            <person name="Maier J."/>
            <person name="Schulte U."/>
        </authorList>
    </citation>
    <scope>NUCLEOTIDE SEQUENCE [LARGE SCALE GENOMIC DNA]</scope>
    <source>
        <strain>ATCC 24698 / 74-OR23-1A / CBS 708.71 / DSM 1257 / FGSC 987</strain>
    </source>
</reference>
<reference key="2">
    <citation type="journal article" date="2003" name="Nature">
        <title>The genome sequence of the filamentous fungus Neurospora crassa.</title>
        <authorList>
            <person name="Galagan J.E."/>
            <person name="Calvo S.E."/>
            <person name="Borkovich K.A."/>
            <person name="Selker E.U."/>
            <person name="Read N.D."/>
            <person name="Jaffe D.B."/>
            <person name="FitzHugh W."/>
            <person name="Ma L.-J."/>
            <person name="Smirnov S."/>
            <person name="Purcell S."/>
            <person name="Rehman B."/>
            <person name="Elkins T."/>
            <person name="Engels R."/>
            <person name="Wang S."/>
            <person name="Nielsen C.B."/>
            <person name="Butler J."/>
            <person name="Endrizzi M."/>
            <person name="Qui D."/>
            <person name="Ianakiev P."/>
            <person name="Bell-Pedersen D."/>
            <person name="Nelson M.A."/>
            <person name="Werner-Washburne M."/>
            <person name="Selitrennikoff C.P."/>
            <person name="Kinsey J.A."/>
            <person name="Braun E.L."/>
            <person name="Zelter A."/>
            <person name="Schulte U."/>
            <person name="Kothe G.O."/>
            <person name="Jedd G."/>
            <person name="Mewes H.-W."/>
            <person name="Staben C."/>
            <person name="Marcotte E."/>
            <person name="Greenberg D."/>
            <person name="Roy A."/>
            <person name="Foley K."/>
            <person name="Naylor J."/>
            <person name="Stange-Thomann N."/>
            <person name="Barrett R."/>
            <person name="Gnerre S."/>
            <person name="Kamal M."/>
            <person name="Kamvysselis M."/>
            <person name="Mauceli E.W."/>
            <person name="Bielke C."/>
            <person name="Rudd S."/>
            <person name="Frishman D."/>
            <person name="Krystofova S."/>
            <person name="Rasmussen C."/>
            <person name="Metzenberg R.L."/>
            <person name="Perkins D.D."/>
            <person name="Kroken S."/>
            <person name="Cogoni C."/>
            <person name="Macino G."/>
            <person name="Catcheside D.E.A."/>
            <person name="Li W."/>
            <person name="Pratt R.J."/>
            <person name="Osmani S.A."/>
            <person name="DeSouza C.P.C."/>
            <person name="Glass N.L."/>
            <person name="Orbach M.J."/>
            <person name="Berglund J.A."/>
            <person name="Voelker R."/>
            <person name="Yarden O."/>
            <person name="Plamann M."/>
            <person name="Seiler S."/>
            <person name="Dunlap J.C."/>
            <person name="Radford A."/>
            <person name="Aramayo R."/>
            <person name="Natvig D.O."/>
            <person name="Alex L.A."/>
            <person name="Mannhaupt G."/>
            <person name="Ebbole D.J."/>
            <person name="Freitag M."/>
            <person name="Paulsen I."/>
            <person name="Sachs M.S."/>
            <person name="Lander E.S."/>
            <person name="Nusbaum C."/>
            <person name="Birren B.W."/>
        </authorList>
    </citation>
    <scope>NUCLEOTIDE SEQUENCE [LARGE SCALE GENOMIC DNA]</scope>
    <source>
        <strain>ATCC 24698 / 74-OR23-1A / CBS 708.71 / DSM 1257 / FGSC 987</strain>
    </source>
</reference>
<organism>
    <name type="scientific">Neurospora crassa (strain ATCC 24698 / 74-OR23-1A / CBS 708.71 / DSM 1257 / FGSC 987)</name>
    <dbReference type="NCBI Taxonomy" id="367110"/>
    <lineage>
        <taxon>Eukaryota</taxon>
        <taxon>Fungi</taxon>
        <taxon>Dikarya</taxon>
        <taxon>Ascomycota</taxon>
        <taxon>Pezizomycotina</taxon>
        <taxon>Sordariomycetes</taxon>
        <taxon>Sordariomycetidae</taxon>
        <taxon>Sordariales</taxon>
        <taxon>Sordariaceae</taxon>
        <taxon>Neurospora</taxon>
    </lineage>
</organism>
<accession>Q871U9</accession>
<accession>Q1K6Z1</accession>
<protein>
    <recommendedName>
        <fullName>Glycosylphosphatidylinositol anchor biosynthesis protein 11</fullName>
    </recommendedName>
</protein>
<name>GPI11_NEUCR</name>
<gene>
    <name type="primary">gpi-11</name>
    <name type="synonym">gpip-1</name>
    <name type="ORF">100H1.070</name>
    <name type="ORF">NCU06663</name>
</gene>
<feature type="chain" id="PRO_0000191769" description="Glycosylphosphatidylinositol anchor biosynthesis protein 11">
    <location>
        <begin position="1"/>
        <end position="272"/>
    </location>
</feature>
<feature type="transmembrane region" description="Helical" evidence="2">
    <location>
        <begin position="91"/>
        <end position="111"/>
    </location>
</feature>
<feature type="transmembrane region" description="Helical" evidence="2">
    <location>
        <begin position="145"/>
        <end position="165"/>
    </location>
</feature>
<feature type="transmembrane region" description="Helical" evidence="2">
    <location>
        <begin position="177"/>
        <end position="197"/>
    </location>
</feature>
<feature type="transmembrane region" description="Helical" evidence="2">
    <location>
        <begin position="215"/>
        <end position="235"/>
    </location>
</feature>
<feature type="transmembrane region" description="Helical" evidence="2">
    <location>
        <begin position="248"/>
        <end position="268"/>
    </location>
</feature>
<feature type="region of interest" description="Disordered" evidence="3">
    <location>
        <begin position="21"/>
        <end position="48"/>
    </location>
</feature>
<feature type="compositionally biased region" description="Polar residues" evidence="3">
    <location>
        <begin position="21"/>
        <end position="31"/>
    </location>
</feature>
<feature type="compositionally biased region" description="Low complexity" evidence="3">
    <location>
        <begin position="32"/>
        <end position="48"/>
    </location>
</feature>